<comment type="function">
    <text>May play a role in plant defense. Probably has no oxalate oxidase activity even if the active site is conserved.</text>
</comment>
<comment type="subunit">
    <text evidence="1">Oligomer (believed to be a pentamer but probably hexamer).</text>
</comment>
<comment type="subcellular location">
    <subcellularLocation>
        <location evidence="1">Secreted</location>
        <location evidence="1">Extracellular space</location>
        <location evidence="1">Apoplast</location>
    </subcellularLocation>
</comment>
<comment type="similarity">
    <text evidence="3">Belongs to the germin family.</text>
</comment>
<organism>
    <name type="scientific">Oryza sativa subsp. japonica</name>
    <name type="common">Rice</name>
    <dbReference type="NCBI Taxonomy" id="39947"/>
    <lineage>
        <taxon>Eukaryota</taxon>
        <taxon>Viridiplantae</taxon>
        <taxon>Streptophyta</taxon>
        <taxon>Embryophyta</taxon>
        <taxon>Tracheophyta</taxon>
        <taxon>Spermatophyta</taxon>
        <taxon>Magnoliopsida</taxon>
        <taxon>Liliopsida</taxon>
        <taxon>Poales</taxon>
        <taxon>Poaceae</taxon>
        <taxon>BOP clade</taxon>
        <taxon>Oryzoideae</taxon>
        <taxon>Oryzeae</taxon>
        <taxon>Oryzinae</taxon>
        <taxon>Oryza</taxon>
        <taxon>Oryza sativa</taxon>
    </lineage>
</organism>
<protein>
    <recommendedName>
        <fullName>Germin-like protein 5-1</fullName>
    </recommendedName>
</protein>
<sequence>MAMVGRSLLLLLLLVTLAAGHGVVVVVAFDPNPLQDFCVADPTSKVRVNGLPCKDPAAVTADDFFFSGVGEPAAGGGRGATASRRYGFTARSVDIPGLNTLGASAARVDVAPGGVFPPHYHPRASETAVVLAGAVYFGFVTSYPDSRVVAKVLRRGDVFAVPQGLVHFLHNNGSEPAALYASLSSQNPGLVLVADALLAAPLPVDLVAKTLLTDEATVDKIRANFIVHRS</sequence>
<reference key="1">
    <citation type="journal article" date="2005" name="Mol. Genet. Genomics">
        <title>A fine physical map of the rice chromosome 5.</title>
        <authorList>
            <person name="Cheng C.-H."/>
            <person name="Chung M.C."/>
            <person name="Liu S.-M."/>
            <person name="Chen S.-K."/>
            <person name="Kao F.Y."/>
            <person name="Lin S.-J."/>
            <person name="Hsiao S.-H."/>
            <person name="Tseng I.C."/>
            <person name="Hsing Y.-I.C."/>
            <person name="Wu H.-P."/>
            <person name="Chen C.-S."/>
            <person name="Shaw J.-F."/>
            <person name="Wu J."/>
            <person name="Matsumoto T."/>
            <person name="Sasaki T."/>
            <person name="Chen H.-C."/>
            <person name="Chow T.-Y."/>
        </authorList>
    </citation>
    <scope>NUCLEOTIDE SEQUENCE [LARGE SCALE GENOMIC DNA]</scope>
    <source>
        <strain>cv. Nipponbare</strain>
    </source>
</reference>
<reference key="2">
    <citation type="journal article" date="2005" name="Nature">
        <title>The map-based sequence of the rice genome.</title>
        <authorList>
            <consortium name="International rice genome sequencing project (IRGSP)"/>
        </authorList>
    </citation>
    <scope>NUCLEOTIDE SEQUENCE [LARGE SCALE GENOMIC DNA]</scope>
    <source>
        <strain>cv. Nipponbare</strain>
    </source>
</reference>
<reference key="3">
    <citation type="journal article" date="2008" name="Nucleic Acids Res.">
        <title>The rice annotation project database (RAP-DB): 2008 update.</title>
        <authorList>
            <consortium name="The rice annotation project (RAP)"/>
        </authorList>
    </citation>
    <scope>GENOME REANNOTATION</scope>
    <source>
        <strain>cv. Nipponbare</strain>
    </source>
</reference>
<reference key="4">
    <citation type="journal article" date="2013" name="Rice">
        <title>Improvement of the Oryza sativa Nipponbare reference genome using next generation sequence and optical map data.</title>
        <authorList>
            <person name="Kawahara Y."/>
            <person name="de la Bastide M."/>
            <person name="Hamilton J.P."/>
            <person name="Kanamori H."/>
            <person name="McCombie W.R."/>
            <person name="Ouyang S."/>
            <person name="Schwartz D.C."/>
            <person name="Tanaka T."/>
            <person name="Wu J."/>
            <person name="Zhou S."/>
            <person name="Childs K.L."/>
            <person name="Davidson R.M."/>
            <person name="Lin H."/>
            <person name="Quesada-Ocampo L."/>
            <person name="Vaillancourt B."/>
            <person name="Sakai H."/>
            <person name="Lee S.S."/>
            <person name="Kim J."/>
            <person name="Numa H."/>
            <person name="Itoh T."/>
            <person name="Buell C.R."/>
            <person name="Matsumoto T."/>
        </authorList>
    </citation>
    <scope>GENOME REANNOTATION</scope>
    <source>
        <strain>cv. Nipponbare</strain>
    </source>
</reference>
<name>GL51_ORYSJ</name>
<proteinExistence type="evidence at transcript level"/>
<keyword id="KW-0052">Apoplast</keyword>
<keyword id="KW-1015">Disulfide bond</keyword>
<keyword id="KW-0325">Glycoprotein</keyword>
<keyword id="KW-0464">Manganese</keyword>
<keyword id="KW-0479">Metal-binding</keyword>
<keyword id="KW-1185">Reference proteome</keyword>
<keyword id="KW-0964">Secreted</keyword>
<keyword id="KW-0732">Signal</keyword>
<evidence type="ECO:0000250" key="1"/>
<evidence type="ECO:0000255" key="2"/>
<evidence type="ECO:0000305" key="3"/>
<gene>
    <name type="ordered locus">Os05g0197200</name>
    <name type="ordered locus">LOC_Os05g10830</name>
    <name type="ORF">P0617H07.14</name>
    <name type="ORF">P0636E04.5</name>
</gene>
<feature type="signal peptide" evidence="2">
    <location>
        <begin position="1"/>
        <end position="20"/>
    </location>
</feature>
<feature type="chain" id="PRO_0000365511" description="Germin-like protein 5-1">
    <location>
        <begin position="21"/>
        <end position="230"/>
    </location>
</feature>
<feature type="domain" description="Cupin type-1" evidence="2">
    <location>
        <begin position="86"/>
        <end position="219"/>
    </location>
</feature>
<feature type="binding site" evidence="1">
    <location>
        <position position="119"/>
    </location>
    <ligand>
        <name>Mn(2+)</name>
        <dbReference type="ChEBI" id="CHEBI:29035"/>
    </ligand>
</feature>
<feature type="binding site" evidence="1">
    <location>
        <position position="121"/>
    </location>
    <ligand>
        <name>Mn(2+)</name>
        <dbReference type="ChEBI" id="CHEBI:29035"/>
    </ligand>
</feature>
<feature type="binding site" evidence="1">
    <location>
        <position position="126"/>
    </location>
    <ligand>
        <name>Mn(2+)</name>
        <dbReference type="ChEBI" id="CHEBI:29035"/>
    </ligand>
</feature>
<feature type="binding site" evidence="1">
    <location>
        <position position="167"/>
    </location>
    <ligand>
        <name>Mn(2+)</name>
        <dbReference type="ChEBI" id="CHEBI:29035"/>
    </ligand>
</feature>
<feature type="glycosylation site" description="N-linked (GlcNAc...) asparagine" evidence="2">
    <location>
        <position position="172"/>
    </location>
</feature>
<feature type="disulfide bond" evidence="1">
    <location>
        <begin position="38"/>
        <end position="53"/>
    </location>
</feature>
<dbReference type="EMBL" id="AC132493">
    <property type="protein sequence ID" value="AAU10816.1"/>
    <property type="molecule type" value="Genomic_DNA"/>
</dbReference>
<dbReference type="EMBL" id="AC135427">
    <property type="protein sequence ID" value="AAV59459.1"/>
    <property type="molecule type" value="Genomic_DNA"/>
</dbReference>
<dbReference type="EMBL" id="AP008211">
    <property type="protein sequence ID" value="BAF16784.1"/>
    <property type="molecule type" value="Genomic_DNA"/>
</dbReference>
<dbReference type="EMBL" id="AP014961">
    <property type="status" value="NOT_ANNOTATED_CDS"/>
    <property type="molecule type" value="Genomic_DNA"/>
</dbReference>
<dbReference type="SMR" id="Q688L5"/>
<dbReference type="FunCoup" id="Q688L5">
    <property type="interactions" value="24"/>
</dbReference>
<dbReference type="STRING" id="39947.Q688L5"/>
<dbReference type="PaxDb" id="39947-Q688L5"/>
<dbReference type="KEGG" id="dosa:Os05g0197200"/>
<dbReference type="InParanoid" id="Q688L5"/>
<dbReference type="OrthoDB" id="1921208at2759"/>
<dbReference type="Proteomes" id="UP000000763">
    <property type="component" value="Chromosome 5"/>
</dbReference>
<dbReference type="Proteomes" id="UP000059680">
    <property type="component" value="Chromosome 5"/>
</dbReference>
<dbReference type="GO" id="GO:0048046">
    <property type="term" value="C:apoplast"/>
    <property type="evidence" value="ECO:0007669"/>
    <property type="project" value="UniProtKB-SubCell"/>
</dbReference>
<dbReference type="GO" id="GO:0030145">
    <property type="term" value="F:manganese ion binding"/>
    <property type="evidence" value="ECO:0007669"/>
    <property type="project" value="InterPro"/>
</dbReference>
<dbReference type="CDD" id="cd02241">
    <property type="entry name" value="cupin_OxOx"/>
    <property type="match status" value="1"/>
</dbReference>
<dbReference type="FunFam" id="2.60.120.10:FF:000025">
    <property type="entry name" value="germin-like protein subfamily 2 member 1"/>
    <property type="match status" value="1"/>
</dbReference>
<dbReference type="Gene3D" id="2.60.120.10">
    <property type="entry name" value="Jelly Rolls"/>
    <property type="match status" value="1"/>
</dbReference>
<dbReference type="InterPro" id="IPR006045">
    <property type="entry name" value="Cupin_1"/>
</dbReference>
<dbReference type="InterPro" id="IPR001929">
    <property type="entry name" value="Germin"/>
</dbReference>
<dbReference type="InterPro" id="IPR014710">
    <property type="entry name" value="RmlC-like_jellyroll"/>
</dbReference>
<dbReference type="InterPro" id="IPR011051">
    <property type="entry name" value="RmlC_Cupin_sf"/>
</dbReference>
<dbReference type="PANTHER" id="PTHR31238">
    <property type="entry name" value="GERMIN-LIKE PROTEIN SUBFAMILY 3 MEMBER 3"/>
    <property type="match status" value="1"/>
</dbReference>
<dbReference type="Pfam" id="PF00190">
    <property type="entry name" value="Cupin_1"/>
    <property type="match status" value="1"/>
</dbReference>
<dbReference type="PRINTS" id="PR00325">
    <property type="entry name" value="GERMIN"/>
</dbReference>
<dbReference type="SMART" id="SM00835">
    <property type="entry name" value="Cupin_1"/>
    <property type="match status" value="1"/>
</dbReference>
<dbReference type="SUPFAM" id="SSF51182">
    <property type="entry name" value="RmlC-like cupins"/>
    <property type="match status" value="1"/>
</dbReference>
<accession>Q688L5</accession>